<proteinExistence type="inferred from homology"/>
<protein>
    <recommendedName>
        <fullName evidence="1">Protein cortex</fullName>
    </recommendedName>
</protein>
<dbReference type="SMR" id="P0DOB9"/>
<dbReference type="GO" id="GO:0005680">
    <property type="term" value="C:anaphase-promoting complex"/>
    <property type="evidence" value="ECO:0007669"/>
    <property type="project" value="TreeGrafter"/>
</dbReference>
<dbReference type="GO" id="GO:0005737">
    <property type="term" value="C:cytoplasm"/>
    <property type="evidence" value="ECO:0007669"/>
    <property type="project" value="UniProtKB-SubCell"/>
</dbReference>
<dbReference type="GO" id="GO:0010997">
    <property type="term" value="F:anaphase-promoting complex binding"/>
    <property type="evidence" value="ECO:0007669"/>
    <property type="project" value="InterPro"/>
</dbReference>
<dbReference type="GO" id="GO:1990757">
    <property type="term" value="F:ubiquitin ligase activator activity"/>
    <property type="evidence" value="ECO:0007669"/>
    <property type="project" value="TreeGrafter"/>
</dbReference>
<dbReference type="GO" id="GO:0031145">
    <property type="term" value="P:anaphase-promoting complex-dependent catabolic process"/>
    <property type="evidence" value="ECO:0007669"/>
    <property type="project" value="TreeGrafter"/>
</dbReference>
<dbReference type="GO" id="GO:1905786">
    <property type="term" value="P:positive regulation of anaphase-promoting complex-dependent catabolic process"/>
    <property type="evidence" value="ECO:0007669"/>
    <property type="project" value="TreeGrafter"/>
</dbReference>
<dbReference type="Gene3D" id="2.130.10.10">
    <property type="entry name" value="YVTN repeat-like/Quinoprotein amine dehydrogenase"/>
    <property type="match status" value="1"/>
</dbReference>
<dbReference type="InterPro" id="IPR033010">
    <property type="entry name" value="Cdc20/Fizzy"/>
</dbReference>
<dbReference type="InterPro" id="IPR015943">
    <property type="entry name" value="WD40/YVTN_repeat-like_dom_sf"/>
</dbReference>
<dbReference type="InterPro" id="IPR036322">
    <property type="entry name" value="WD40_repeat_dom_sf"/>
</dbReference>
<dbReference type="InterPro" id="IPR001680">
    <property type="entry name" value="WD40_rpt"/>
</dbReference>
<dbReference type="PANTHER" id="PTHR19918">
    <property type="entry name" value="CELL DIVISION CYCLE 20 CDC20 FIZZY -RELATED"/>
    <property type="match status" value="1"/>
</dbReference>
<dbReference type="PANTHER" id="PTHR19918:SF52">
    <property type="entry name" value="PROTEIN CORTEX"/>
    <property type="match status" value="1"/>
</dbReference>
<dbReference type="Pfam" id="PF00400">
    <property type="entry name" value="WD40"/>
    <property type="match status" value="2"/>
</dbReference>
<dbReference type="SMART" id="SM00320">
    <property type="entry name" value="WD40"/>
    <property type="match status" value="3"/>
</dbReference>
<dbReference type="SUPFAM" id="SSF50978">
    <property type="entry name" value="WD40 repeat-like"/>
    <property type="match status" value="1"/>
</dbReference>
<dbReference type="PROSITE" id="PS00678">
    <property type="entry name" value="WD_REPEATS_1"/>
    <property type="match status" value="1"/>
</dbReference>
<dbReference type="PROSITE" id="PS50082">
    <property type="entry name" value="WD_REPEATS_2"/>
    <property type="match status" value="1"/>
</dbReference>
<dbReference type="PROSITE" id="PS50294">
    <property type="entry name" value="WD_REPEATS_REGION"/>
    <property type="match status" value="1"/>
</dbReference>
<comment type="function">
    <text evidence="1 3">Controls wing pigmentation patterning by regulating scale cell development, thereby playing a key role in mimicry and crypsis (PubMed:27251285). Probably acts as an activator of the anaphase promoting complex/cyclosome (APC/C) that promotes the ubiquitin ligase activity and substrate specificity of the APC/C (By similarity).</text>
</comment>
<comment type="subcellular location">
    <subcellularLocation>
        <location evidence="1">Cytoplasm</location>
    </subcellularLocation>
</comment>
<comment type="polymorphism">
    <text evidence="3">Variations in cort gene cortex directly affect wing pigmentation patterning. Variations affecting cort expression have become a major target for natural selection acting on color and pattern variation in lepidoptera.</text>
</comment>
<comment type="similarity">
    <text evidence="4">Belongs to the WD repeat CORT family.</text>
</comment>
<name>CORT_HELEA</name>
<feature type="chain" id="PRO_0000437219" description="Protein cortex">
    <location>
        <begin position="1"/>
        <end position="449"/>
    </location>
</feature>
<feature type="repeat" description="WD 1" evidence="2">
    <location>
        <begin position="108"/>
        <end position="148"/>
    </location>
</feature>
<feature type="repeat" description="WD 2" evidence="2">
    <location>
        <begin position="149"/>
        <end position="188"/>
    </location>
</feature>
<feature type="repeat" description="WD 3" evidence="2">
    <location>
        <begin position="198"/>
        <end position="237"/>
    </location>
</feature>
<feature type="repeat" description="WD 4" evidence="2">
    <location>
        <begin position="283"/>
        <end position="327"/>
    </location>
</feature>
<feature type="repeat" description="WD 5" evidence="2">
    <location>
        <begin position="345"/>
        <end position="382"/>
    </location>
</feature>
<feature type="repeat" description="WD 6" evidence="2">
    <location>
        <begin position="386"/>
        <end position="425"/>
    </location>
</feature>
<feature type="short sequence motif" description="D-box" evidence="1">
    <location>
        <begin position="386"/>
        <end position="397"/>
    </location>
</feature>
<keyword id="KW-0963">Cytoplasm</keyword>
<keyword id="KW-0677">Repeat</keyword>
<keyword id="KW-0853">WD repeat</keyword>
<reference key="1">
    <citation type="journal article" date="2016" name="Nature">
        <title>The gene cortex controls mimicry and crypsis in butterflies and moths.</title>
        <authorList>
            <person name="Nadeau N.J."/>
            <person name="Pardo-Diaz C."/>
            <person name="Whibley A."/>
            <person name="Supple M.A."/>
            <person name="Saenko S.V."/>
            <person name="Wallbank R.W."/>
            <person name="Wu G.C."/>
            <person name="Maroja L."/>
            <person name="Ferguson L."/>
            <person name="Hanly J.J."/>
            <person name="Hines H."/>
            <person name="Salazar C."/>
            <person name="Merrill R.M."/>
            <person name="Dowling A.J."/>
            <person name="ffrench-Constant R.H."/>
            <person name="Llaurens V."/>
            <person name="Joron M."/>
            <person name="McMillan W.O."/>
            <person name="Jiggins C.D."/>
        </authorList>
    </citation>
    <scope>NUCLEOTIDE SEQUENCE [GENOMIC DNA]</scope>
    <scope>FUNCTION</scope>
    <scope>POLYMORPHISM</scope>
</reference>
<sequence>MDRTTFGRKTFNTQRNRLDRFVAPRDSFSETRRRRSWHAACDVQPINNDIWFGKNLKKKKYTKYLDKALDLESPDKSNSIKRMVQPWPCIPRKKTYLSSADSILDLPTYSYAIFPELLDWSNDNVLVAALGRNYHKWSWRSQSLISQGYAEYQIQCCKFDPRGELLLLGTYMKTVEIHNNVKSKKIDSNTCNCLEKDNRNCSITAVDWSPTGNSFATGCSWGAVTSFTRAAKLISWRHFVREAILLILIALSPNARYLAVTAVNTALVLLLTWPSLEMYSSIDSDWTIRTISWHPWRSALLGVGAVTDDLQARIALWDAPTCKVRDTSIGPKRYRLDAMLFSHRTGELVLSMWNSDRAILHPKACSQLVVMSDPDTMVDQWGEGRSGLDRVRTMVFSPDGTKLATATSDEDLIIWNFLPEDKKMKKTKCRFFSALPEYLDEAMQGYSLR</sequence>
<gene>
    <name evidence="1" type="primary">cort</name>
</gene>
<evidence type="ECO:0000250" key="1">
    <source>
        <dbReference type="UniProtKB" id="Q960N3"/>
    </source>
</evidence>
<evidence type="ECO:0000255" key="2"/>
<evidence type="ECO:0000269" key="3">
    <source>
    </source>
</evidence>
<evidence type="ECO:0000305" key="4"/>
<accession>P0DOB9</accession>
<organism>
    <name type="scientific">Heliconius erato</name>
    <name type="common">Crimson patched longwing butterfly</name>
    <dbReference type="NCBI Taxonomy" id="33431"/>
    <lineage>
        <taxon>Eukaryota</taxon>
        <taxon>Metazoa</taxon>
        <taxon>Ecdysozoa</taxon>
        <taxon>Arthropoda</taxon>
        <taxon>Hexapoda</taxon>
        <taxon>Insecta</taxon>
        <taxon>Pterygota</taxon>
        <taxon>Neoptera</taxon>
        <taxon>Endopterygota</taxon>
        <taxon>Lepidoptera</taxon>
        <taxon>Glossata</taxon>
        <taxon>Ditrysia</taxon>
        <taxon>Papilionoidea</taxon>
        <taxon>Nymphalidae</taxon>
        <taxon>Heliconiinae</taxon>
        <taxon>Heliconiini</taxon>
        <taxon>Heliconius</taxon>
    </lineage>
</organism>